<protein>
    <recommendedName>
        <fullName>Mitogen-activated protein kinase HOG1</fullName>
        <shortName>MAP kinase HOG1</shortName>
        <ecNumber evidence="2">2.7.11.24</ecNumber>
    </recommendedName>
</protein>
<feature type="chain" id="PRO_0000186328" description="Mitogen-activated protein kinase HOG1">
    <location>
        <begin position="1"/>
        <end position="377"/>
    </location>
</feature>
<feature type="domain" description="Protein kinase" evidence="4">
    <location>
        <begin position="23"/>
        <end position="305"/>
    </location>
</feature>
<feature type="region of interest" description="Disordered" evidence="6">
    <location>
        <begin position="354"/>
        <end position="377"/>
    </location>
</feature>
<feature type="short sequence motif" description="TXY">
    <location>
        <begin position="174"/>
        <end position="176"/>
    </location>
</feature>
<feature type="compositionally biased region" description="Polar residues" evidence="6">
    <location>
        <begin position="359"/>
        <end position="377"/>
    </location>
</feature>
<feature type="active site" description="Proton acceptor" evidence="4 5">
    <location>
        <position position="144"/>
    </location>
</feature>
<feature type="binding site" evidence="4">
    <location>
        <begin position="29"/>
        <end position="37"/>
    </location>
    <ligand>
        <name>ATP</name>
        <dbReference type="ChEBI" id="CHEBI:30616"/>
    </ligand>
</feature>
<feature type="binding site" evidence="4">
    <location>
        <position position="52"/>
    </location>
    <ligand>
        <name>ATP</name>
        <dbReference type="ChEBI" id="CHEBI:30616"/>
    </ligand>
</feature>
<feature type="modified residue" description="Phosphothreonine" evidence="1">
    <location>
        <position position="174"/>
    </location>
</feature>
<feature type="modified residue" description="Phosphotyrosine" evidence="1">
    <location>
        <position position="176"/>
    </location>
</feature>
<feature type="sequence conflict" description="In Ref. 1; CAA62214." evidence="18" ref="1">
    <original>E</original>
    <variation>Q</variation>
    <location>
        <position position="298"/>
    </location>
</feature>
<reference key="1">
    <citation type="journal article" date="1996" name="J. Bacteriol.">
        <title>The mitogen-activated protein kinase homolog HOG1 gene controls glycerol accumulation in the pathogenic fungus Candida albicans.</title>
        <authorList>
            <person name="San Jose C."/>
            <person name="Monge R.A."/>
            <person name="Perez-Diaz R."/>
            <person name="Pla J."/>
            <person name="Nombela C."/>
        </authorList>
    </citation>
    <scope>NUCLEOTIDE SEQUENCE [GENOMIC DNA]</scope>
    <scope>FUNCTION</scope>
    <source>
        <strain>ATCC 64385 / 1001</strain>
    </source>
</reference>
<reference key="2">
    <citation type="journal article" date="2004" name="Proc. Natl. Acad. Sci. U.S.A.">
        <title>The diploid genome sequence of Candida albicans.</title>
        <authorList>
            <person name="Jones T."/>
            <person name="Federspiel N.A."/>
            <person name="Chibana H."/>
            <person name="Dungan J."/>
            <person name="Kalman S."/>
            <person name="Magee B.B."/>
            <person name="Newport G."/>
            <person name="Thorstenson Y.R."/>
            <person name="Agabian N."/>
            <person name="Magee P.T."/>
            <person name="Davis R.W."/>
            <person name="Scherer S."/>
        </authorList>
    </citation>
    <scope>NUCLEOTIDE SEQUENCE [LARGE SCALE GENOMIC DNA]</scope>
    <source>
        <strain>SC5314 / ATCC MYA-2876</strain>
    </source>
</reference>
<reference key="3">
    <citation type="journal article" date="2007" name="Genome Biol.">
        <title>Assembly of the Candida albicans genome into sixteen supercontigs aligned on the eight chromosomes.</title>
        <authorList>
            <person name="van het Hoog M."/>
            <person name="Rast T.J."/>
            <person name="Martchenko M."/>
            <person name="Grindle S."/>
            <person name="Dignard D."/>
            <person name="Hogues H."/>
            <person name="Cuomo C."/>
            <person name="Berriman M."/>
            <person name="Scherer S."/>
            <person name="Magee B.B."/>
            <person name="Whiteway M."/>
            <person name="Chibana H."/>
            <person name="Nantel A."/>
            <person name="Magee P.T."/>
        </authorList>
    </citation>
    <scope>GENOME REANNOTATION</scope>
    <source>
        <strain>SC5314 / ATCC MYA-2876</strain>
    </source>
</reference>
<reference key="4">
    <citation type="journal article" date="2013" name="Genome Biol.">
        <title>Assembly of a phased diploid Candida albicans genome facilitates allele-specific measurements and provides a simple model for repeat and indel structure.</title>
        <authorList>
            <person name="Muzzey D."/>
            <person name="Schwartz K."/>
            <person name="Weissman J.S."/>
            <person name="Sherlock G."/>
        </authorList>
    </citation>
    <scope>NUCLEOTIDE SEQUENCE [LARGE SCALE GENOMIC DNA]</scope>
    <scope>GENOME REANNOTATION</scope>
    <source>
        <strain>SC5314 / ATCC MYA-2876</strain>
    </source>
</reference>
<reference key="5">
    <citation type="journal article" date="1999" name="J. Bacteriol.">
        <title>Role of the mitogen-activated protein kinase Hog1p in morphogenesis and virulence of Candida albicans.</title>
        <authorList>
            <person name="Alonso-Monge R."/>
            <person name="Navarro-Garcia F."/>
            <person name="Molero G."/>
            <person name="Diez-Orejas R."/>
            <person name="Gustin M.C."/>
            <person name="Pla J."/>
            <person name="Sanchez M."/>
            <person name="Nombela C."/>
        </authorList>
    </citation>
    <scope>FUNCTION</scope>
</reference>
<reference key="6">
    <citation type="journal article" date="2003" name="Eukaryot. Cell">
        <title>The Hog1 mitogen-activated protein kinase is essential in the oxidative stress response and chlamydospore formation in Candida albicans.</title>
        <authorList>
            <person name="Alonso-Monge R."/>
            <person name="Navarro-Garcia F."/>
            <person name="Roman E."/>
            <person name="Negredo A.I."/>
            <person name="Eisman B."/>
            <person name="Nombela C."/>
            <person name="Pla J."/>
        </authorList>
    </citation>
    <scope>FUNCTION</scope>
    <scope>PHOSPHORYLATION</scope>
</reference>
<reference key="7">
    <citation type="journal article" date="2003" name="Eukaryot. Cell">
        <title>Candida albicans response regulator gene SSK1 regulates a subset of genes whose functions are associated with cell wall biosynthesis and adaptation to oxidative stress.</title>
        <authorList>
            <person name="Chauhan N."/>
            <person name="Inglis D."/>
            <person name="Roman E."/>
            <person name="Pla J."/>
            <person name="Li D."/>
            <person name="Calera J.A."/>
            <person name="Calderone R."/>
        </authorList>
    </citation>
    <scope>FUNCTION</scope>
    <scope>PHOSPHORYLATION</scope>
</reference>
<reference key="8">
    <citation type="journal article" date="2004" name="Mol. Biol. Cell">
        <title>A conserved stress-activated protein kinase regulates a core stress response in the human pathogen Candida albicans.</title>
        <authorList>
            <person name="Smith D.A."/>
            <person name="Nicholls S."/>
            <person name="Morgan B.A."/>
            <person name="Brown A.J.P."/>
            <person name="Quinn J."/>
        </authorList>
    </citation>
    <scope>FUNCTION</scope>
    <scope>SUBCELLULAR LOCATION</scope>
    <scope>PHOSPHORYLATION</scope>
</reference>
<reference key="9">
    <citation type="journal article" date="2005" name="Microbiology">
        <title>The Pbs2 MAP kinase kinase is essential for the oxidative-stress response in the fungal pathogen Candida albicans.</title>
        <authorList>
            <person name="Arana D.M."/>
            <person name="Nombela C."/>
            <person name="Alonso-Monge R."/>
            <person name="Pla J."/>
        </authorList>
    </citation>
    <scope>FUNCTION</scope>
    <scope>SUBCELLULAR LOCATION</scope>
</reference>
<reference key="10">
    <citation type="journal article" date="2005" name="Microbiology">
        <title>The MAP kinase Mkc1p is activated under different stress conditions in Candida albicans.</title>
        <authorList>
            <person name="Navarro-Garcia F."/>
            <person name="Eisman B."/>
            <person name="Fiuza S.M."/>
            <person name="Nombela C."/>
            <person name="Pla J."/>
        </authorList>
    </citation>
    <scope>FUNCTION</scope>
    <scope>PHOSPHORYLATION</scope>
</reference>
<reference key="11">
    <citation type="journal article" date="2005" name="Microbiology">
        <title>The MAP kinase Hog1p differentially regulates stress-induced production and accumulation of glycerol and D-arabitol in Candida albicans.</title>
        <authorList>
            <person name="Kayingo G."/>
            <person name="Wong B."/>
        </authorList>
    </citation>
    <scope>FUNCTION</scope>
</reference>
<reference key="12">
    <citation type="journal article" date="2006" name="Eukaryot. Cell">
        <title>The Cek1 and Hog1 mitogen-activated protein kinases play complementary roles in cell wall biogenesis and chlamydospore formation in the fungal pathogen Candida albicans.</title>
        <authorList>
            <person name="Eisman B."/>
            <person name="Alonso-Monge R."/>
            <person name="Roman E."/>
            <person name="Arana D.M."/>
            <person name="Nombela C."/>
            <person name="Pla J."/>
        </authorList>
    </citation>
    <scope>FUNCTION</scope>
</reference>
<reference key="13">
    <citation type="journal article" date="2006" name="Mol. Biol. Cell">
        <title>Role of the Hog1 stress-activated protein kinase in the global transcriptional response to stress in the fungal pathogen Candida albicans.</title>
        <authorList>
            <person name="Enjalbert B."/>
            <person name="Smith D.A."/>
            <person name="Cornell M.J."/>
            <person name="Alam I."/>
            <person name="Nicholls S."/>
            <person name="Brown A.J.P."/>
            <person name="Quinn J."/>
        </authorList>
    </citation>
    <scope>FUNCTION</scope>
</reference>
<reference key="14">
    <citation type="journal article" date="2006" name="Mol. Microbiol.">
        <title>Functional studies of the Ssk1p response regulator protein of Candida albicans as determined by phenotypic analysis of receiver domain point mutants.</title>
        <authorList>
            <person name="Menon V."/>
            <person name="Li D."/>
            <person name="Chauhan N."/>
            <person name="Rajnarayanan R."/>
            <person name="Dubrovska A."/>
            <person name="West A.H."/>
            <person name="Calderone R."/>
        </authorList>
    </citation>
    <scope>SUBCELLULAR LOCATION</scope>
    <scope>PHOSPHORYLATION</scope>
</reference>
<accession>Q92207</accession>
<accession>A0A1D8PGU7</accession>
<accession>Q5AHA1</accession>
<dbReference type="EC" id="2.7.11.24" evidence="2"/>
<dbReference type="EMBL" id="X90586">
    <property type="protein sequence ID" value="CAA62214.1"/>
    <property type="molecule type" value="Genomic_DNA"/>
</dbReference>
<dbReference type="EMBL" id="CP017624">
    <property type="protein sequence ID" value="AOW27369.1"/>
    <property type="molecule type" value="Genomic_DNA"/>
</dbReference>
<dbReference type="RefSeq" id="XP_721016.1">
    <property type="nucleotide sequence ID" value="XM_715923.1"/>
</dbReference>
<dbReference type="SMR" id="Q92207"/>
<dbReference type="BioGRID" id="1220364">
    <property type="interactions" value="7"/>
</dbReference>
<dbReference type="FunCoup" id="Q92207">
    <property type="interactions" value="694"/>
</dbReference>
<dbReference type="STRING" id="237561.Q92207"/>
<dbReference type="EnsemblFungi" id="C2_03330C_A-T">
    <property type="protein sequence ID" value="C2_03330C_A-T-p1"/>
    <property type="gene ID" value="C2_03330C_A"/>
</dbReference>
<dbReference type="GeneID" id="3637393"/>
<dbReference type="KEGG" id="cal:CAALFM_C203330CA"/>
<dbReference type="CGD" id="CAL0000197240">
    <property type="gene designation" value="HOG1"/>
</dbReference>
<dbReference type="VEuPathDB" id="FungiDB:C2_03330C_A"/>
<dbReference type="eggNOG" id="KOG0660">
    <property type="taxonomic scope" value="Eukaryota"/>
</dbReference>
<dbReference type="HOGENOM" id="CLU_000288_181_1_1"/>
<dbReference type="InParanoid" id="Q92207"/>
<dbReference type="OrthoDB" id="192887at2759"/>
<dbReference type="BRENDA" id="2.7.11.24">
    <property type="organism ID" value="1096"/>
</dbReference>
<dbReference type="PHI-base" id="PHI:10024"/>
<dbReference type="PHI-base" id="PHI:11021"/>
<dbReference type="PHI-base" id="PHI:149"/>
<dbReference type="PHI-base" id="PHI:9769"/>
<dbReference type="PRO" id="PR:Q92207"/>
<dbReference type="Proteomes" id="UP000000559">
    <property type="component" value="Chromosome 2"/>
</dbReference>
<dbReference type="GO" id="GO:0000785">
    <property type="term" value="C:chromatin"/>
    <property type="evidence" value="ECO:0007669"/>
    <property type="project" value="EnsemblFungi"/>
</dbReference>
<dbReference type="GO" id="GO:0005737">
    <property type="term" value="C:cytoplasm"/>
    <property type="evidence" value="ECO:0000314"/>
    <property type="project" value="CGD"/>
</dbReference>
<dbReference type="GO" id="GO:0005758">
    <property type="term" value="C:mitochondrial intermembrane space"/>
    <property type="evidence" value="ECO:0007669"/>
    <property type="project" value="EnsemblFungi"/>
</dbReference>
<dbReference type="GO" id="GO:0005634">
    <property type="term" value="C:nucleus"/>
    <property type="evidence" value="ECO:0000314"/>
    <property type="project" value="CGD"/>
</dbReference>
<dbReference type="GO" id="GO:0005524">
    <property type="term" value="F:ATP binding"/>
    <property type="evidence" value="ECO:0007669"/>
    <property type="project" value="UniProtKB-KW"/>
</dbReference>
<dbReference type="GO" id="GO:0005516">
    <property type="term" value="F:calmodulin binding"/>
    <property type="evidence" value="ECO:0007669"/>
    <property type="project" value="EnsemblFungi"/>
</dbReference>
<dbReference type="GO" id="GO:0003682">
    <property type="term" value="F:chromatin binding"/>
    <property type="evidence" value="ECO:0007669"/>
    <property type="project" value="EnsemblFungi"/>
</dbReference>
<dbReference type="GO" id="GO:0004707">
    <property type="term" value="F:MAP kinase activity"/>
    <property type="evidence" value="ECO:0000250"/>
    <property type="project" value="CGD"/>
</dbReference>
<dbReference type="GO" id="GO:0004672">
    <property type="term" value="F:protein kinase activity"/>
    <property type="evidence" value="ECO:0000314"/>
    <property type="project" value="CGD"/>
</dbReference>
<dbReference type="GO" id="GO:0106310">
    <property type="term" value="F:protein serine kinase activity"/>
    <property type="evidence" value="ECO:0007669"/>
    <property type="project" value="RHEA"/>
</dbReference>
<dbReference type="GO" id="GO:0004674">
    <property type="term" value="F:protein serine/threonine kinase activity"/>
    <property type="evidence" value="ECO:0000318"/>
    <property type="project" value="GO_Central"/>
</dbReference>
<dbReference type="GO" id="GO:0008353">
    <property type="term" value="F:RNA polymerase II CTD heptapeptide repeat kinase activity"/>
    <property type="evidence" value="ECO:0007669"/>
    <property type="project" value="EnsemblFungi"/>
</dbReference>
<dbReference type="GO" id="GO:0071276">
    <property type="term" value="P:cellular response to cadmium ion"/>
    <property type="evidence" value="ECO:0000315"/>
    <property type="project" value="CGD"/>
</dbReference>
<dbReference type="GO" id="GO:0034605">
    <property type="term" value="P:cellular response to heat"/>
    <property type="evidence" value="ECO:0000315"/>
    <property type="project" value="CGD"/>
</dbReference>
<dbReference type="GO" id="GO:0071500">
    <property type="term" value="P:cellular response to nitrosative stress"/>
    <property type="evidence" value="ECO:0000315"/>
    <property type="project" value="CGD"/>
</dbReference>
<dbReference type="GO" id="GO:0071470">
    <property type="term" value="P:cellular response to osmotic stress"/>
    <property type="evidence" value="ECO:0000315"/>
    <property type="project" value="CGD"/>
</dbReference>
<dbReference type="GO" id="GO:0034599">
    <property type="term" value="P:cellular response to oxidative stress"/>
    <property type="evidence" value="ECO:0000314"/>
    <property type="project" value="CGD"/>
</dbReference>
<dbReference type="GO" id="GO:0071467">
    <property type="term" value="P:cellular response to pH"/>
    <property type="evidence" value="ECO:0000315"/>
    <property type="project" value="CGD"/>
</dbReference>
<dbReference type="GO" id="GO:0033554">
    <property type="term" value="P:cellular response to stress"/>
    <property type="evidence" value="ECO:0000315"/>
    <property type="project" value="CGD"/>
</dbReference>
<dbReference type="GO" id="GO:0001410">
    <property type="term" value="P:chlamydospore formation"/>
    <property type="evidence" value="ECO:0000315"/>
    <property type="project" value="CGD"/>
</dbReference>
<dbReference type="GO" id="GO:0030447">
    <property type="term" value="P:filamentous growth"/>
    <property type="evidence" value="ECO:0000315"/>
    <property type="project" value="CGD"/>
</dbReference>
<dbReference type="GO" id="GO:0044182">
    <property type="term" value="P:filamentous growth of a population of unicellular organisms"/>
    <property type="evidence" value="ECO:0000315"/>
    <property type="project" value="CGD"/>
</dbReference>
<dbReference type="GO" id="GO:0036180">
    <property type="term" value="P:filamentous growth of a population of unicellular organisms in response to biotic stimulus"/>
    <property type="evidence" value="ECO:0000315"/>
    <property type="project" value="CGD"/>
</dbReference>
<dbReference type="GO" id="GO:0036168">
    <property type="term" value="P:filamentous growth of a population of unicellular organisms in response to heat"/>
    <property type="evidence" value="ECO:0000315"/>
    <property type="project" value="CGD"/>
</dbReference>
<dbReference type="GO" id="GO:0031505">
    <property type="term" value="P:fungal-type cell wall organization"/>
    <property type="evidence" value="ECO:0000315"/>
    <property type="project" value="CGD"/>
</dbReference>
<dbReference type="GO" id="GO:0006973">
    <property type="term" value="P:intracellular accumulation of glycerol"/>
    <property type="evidence" value="ECO:0000315"/>
    <property type="project" value="CGD"/>
</dbReference>
<dbReference type="GO" id="GO:0034440">
    <property type="term" value="P:lipid oxidation"/>
    <property type="evidence" value="ECO:0000315"/>
    <property type="project" value="CGD"/>
</dbReference>
<dbReference type="GO" id="GO:1990625">
    <property type="term" value="P:negative regulation of cytoplasmic translational initiation in response to stress"/>
    <property type="evidence" value="ECO:0007669"/>
    <property type="project" value="EnsemblFungi"/>
</dbReference>
<dbReference type="GO" id="GO:0001100">
    <property type="term" value="P:negative regulation of exit from mitosis"/>
    <property type="evidence" value="ECO:0007669"/>
    <property type="project" value="EnsemblFungi"/>
</dbReference>
<dbReference type="GO" id="GO:1900429">
    <property type="term" value="P:negative regulation of filamentous growth of a population of unicellular organisms"/>
    <property type="evidence" value="ECO:0000315"/>
    <property type="project" value="CGD"/>
</dbReference>
<dbReference type="GO" id="GO:1900444">
    <property type="term" value="P:negative regulation of filamentous growth of a population of unicellular organisms in response to biotic stimulus"/>
    <property type="evidence" value="ECO:0000315"/>
    <property type="project" value="CGD"/>
</dbReference>
<dbReference type="GO" id="GO:1900432">
    <property type="term" value="P:negative regulation of filamentous growth of a population of unicellular organisms in response to heat"/>
    <property type="evidence" value="ECO:0000315"/>
    <property type="project" value="CGD"/>
</dbReference>
<dbReference type="GO" id="GO:2000134">
    <property type="term" value="P:negative regulation of G1/S transition of mitotic cell cycle"/>
    <property type="evidence" value="ECO:0000315"/>
    <property type="project" value="CGD"/>
</dbReference>
<dbReference type="GO" id="GO:0010972">
    <property type="term" value="P:negative regulation of G2/M transition of mitotic cell cycle"/>
    <property type="evidence" value="ECO:0007669"/>
    <property type="project" value="EnsemblFungi"/>
</dbReference>
<dbReference type="GO" id="GO:0010515">
    <property type="term" value="P:negative regulation of induction of conjugation with cellular fusion"/>
    <property type="evidence" value="ECO:0007669"/>
    <property type="project" value="EnsemblFungi"/>
</dbReference>
<dbReference type="GO" id="GO:0007231">
    <property type="term" value="P:osmosensory signaling pathway"/>
    <property type="evidence" value="ECO:0000318"/>
    <property type="project" value="GO_Central"/>
</dbReference>
<dbReference type="GO" id="GO:0038066">
    <property type="term" value="P:p38MAPK cascade"/>
    <property type="evidence" value="ECO:0007669"/>
    <property type="project" value="EnsemblFungi"/>
</dbReference>
<dbReference type="GO" id="GO:0046173">
    <property type="term" value="P:polyol biosynthetic process"/>
    <property type="evidence" value="ECO:0000315"/>
    <property type="project" value="CGD"/>
</dbReference>
<dbReference type="GO" id="GO:0010971">
    <property type="term" value="P:positive regulation of G2/M transition of mitotic cell cycle"/>
    <property type="evidence" value="ECO:0007669"/>
    <property type="project" value="EnsemblFungi"/>
</dbReference>
<dbReference type="GO" id="GO:0042307">
    <property type="term" value="P:positive regulation of protein import into nucleus"/>
    <property type="evidence" value="ECO:0007669"/>
    <property type="project" value="EnsemblFungi"/>
</dbReference>
<dbReference type="GO" id="GO:0045944">
    <property type="term" value="P:positive regulation of transcription by RNA polymerase II"/>
    <property type="evidence" value="ECO:0007669"/>
    <property type="project" value="EnsemblFungi"/>
</dbReference>
<dbReference type="GO" id="GO:1903715">
    <property type="term" value="P:regulation of aerobic respiration"/>
    <property type="evidence" value="ECO:0007669"/>
    <property type="project" value="EnsemblFungi"/>
</dbReference>
<dbReference type="GO" id="GO:1900443">
    <property type="term" value="P:regulation of filamentous growth of a population of unicellular organisms in response to biotic stimulus"/>
    <property type="evidence" value="ECO:0000315"/>
    <property type="project" value="CGD"/>
</dbReference>
<dbReference type="GO" id="GO:0016241">
    <property type="term" value="P:regulation of macroautophagy"/>
    <property type="evidence" value="ECO:0007669"/>
    <property type="project" value="EnsemblFungi"/>
</dbReference>
<dbReference type="GO" id="GO:0051445">
    <property type="term" value="P:regulation of meiotic cell cycle"/>
    <property type="evidence" value="ECO:0007669"/>
    <property type="project" value="EnsemblFungi"/>
</dbReference>
<dbReference type="GO" id="GO:0033262">
    <property type="term" value="P:regulation of nuclear cell cycle DNA replication"/>
    <property type="evidence" value="ECO:0007669"/>
    <property type="project" value="EnsemblFungi"/>
</dbReference>
<dbReference type="GO" id="GO:0010520">
    <property type="term" value="P:regulation of reciprocal meiotic recombination"/>
    <property type="evidence" value="ECO:0007669"/>
    <property type="project" value="EnsemblFungi"/>
</dbReference>
<dbReference type="GO" id="GO:0009651">
    <property type="term" value="P:response to salt stress"/>
    <property type="evidence" value="ECO:0000315"/>
    <property type="project" value="CGD"/>
</dbReference>
<dbReference type="GO" id="GO:0009636">
    <property type="term" value="P:response to toxic substance"/>
    <property type="evidence" value="ECO:0000315"/>
    <property type="project" value="CGD"/>
</dbReference>
<dbReference type="GO" id="GO:0051403">
    <property type="term" value="P:stress-activated MAPK cascade"/>
    <property type="evidence" value="ECO:0000314"/>
    <property type="project" value="CGD"/>
</dbReference>
<dbReference type="FunFam" id="1.10.510.10:FF:000049">
    <property type="entry name" value="Mitogen-activated protein kinase"/>
    <property type="match status" value="1"/>
</dbReference>
<dbReference type="FunFam" id="3.30.200.20:FF:000050">
    <property type="entry name" value="Mitogen-activated protein kinase"/>
    <property type="match status" value="1"/>
</dbReference>
<dbReference type="Gene3D" id="3.30.200.20">
    <property type="entry name" value="Phosphorylase Kinase, domain 1"/>
    <property type="match status" value="1"/>
</dbReference>
<dbReference type="Gene3D" id="1.10.510.10">
    <property type="entry name" value="Transferase(Phosphotransferase) domain 1"/>
    <property type="match status" value="1"/>
</dbReference>
<dbReference type="InterPro" id="IPR011009">
    <property type="entry name" value="Kinase-like_dom_sf"/>
</dbReference>
<dbReference type="InterPro" id="IPR050117">
    <property type="entry name" value="MAP_kinase"/>
</dbReference>
<dbReference type="InterPro" id="IPR003527">
    <property type="entry name" value="MAP_kinase_CS"/>
</dbReference>
<dbReference type="InterPro" id="IPR000719">
    <property type="entry name" value="Prot_kinase_dom"/>
</dbReference>
<dbReference type="InterPro" id="IPR017441">
    <property type="entry name" value="Protein_kinase_ATP_BS"/>
</dbReference>
<dbReference type="InterPro" id="IPR008271">
    <property type="entry name" value="Ser/Thr_kinase_AS"/>
</dbReference>
<dbReference type="PANTHER" id="PTHR24055">
    <property type="entry name" value="MITOGEN-ACTIVATED PROTEIN KINASE"/>
    <property type="match status" value="1"/>
</dbReference>
<dbReference type="Pfam" id="PF00069">
    <property type="entry name" value="Pkinase"/>
    <property type="match status" value="1"/>
</dbReference>
<dbReference type="SMART" id="SM00220">
    <property type="entry name" value="S_TKc"/>
    <property type="match status" value="1"/>
</dbReference>
<dbReference type="SUPFAM" id="SSF56112">
    <property type="entry name" value="Protein kinase-like (PK-like)"/>
    <property type="match status" value="1"/>
</dbReference>
<dbReference type="PROSITE" id="PS01351">
    <property type="entry name" value="MAPK"/>
    <property type="match status" value="1"/>
</dbReference>
<dbReference type="PROSITE" id="PS00107">
    <property type="entry name" value="PROTEIN_KINASE_ATP"/>
    <property type="match status" value="1"/>
</dbReference>
<dbReference type="PROSITE" id="PS50011">
    <property type="entry name" value="PROTEIN_KINASE_DOM"/>
    <property type="match status" value="1"/>
</dbReference>
<dbReference type="PROSITE" id="PS00108">
    <property type="entry name" value="PROTEIN_KINASE_ST"/>
    <property type="match status" value="1"/>
</dbReference>
<proteinExistence type="evidence at protein level"/>
<organism>
    <name type="scientific">Candida albicans (strain SC5314 / ATCC MYA-2876)</name>
    <name type="common">Yeast</name>
    <dbReference type="NCBI Taxonomy" id="237561"/>
    <lineage>
        <taxon>Eukaryota</taxon>
        <taxon>Fungi</taxon>
        <taxon>Dikarya</taxon>
        <taxon>Ascomycota</taxon>
        <taxon>Saccharomycotina</taxon>
        <taxon>Pichiomycetes</taxon>
        <taxon>Debaryomycetaceae</taxon>
        <taxon>Candida/Lodderomyces clade</taxon>
        <taxon>Candida</taxon>
    </lineage>
</organism>
<sequence length="377" mass="42947">MSADGEFTRTQIFGTVFEITNRYTELNPVGMGAFGLVCSAVDRLTGQNVAVKKVMKPFSTSVLAKRTYRELKLLKHLKHENLITLDDIFISPLEDIYFVNELQGTDLHRLLNSRPLEKQFIQYFTYQIMRGLKYIHSAGVIHRDLKPSNILINENCDLKICDFGLARLQDPQMTGYVSTRYYRAPEIMLTWQKYDTEVDLWSVGCILAEMIEGKPLFPGKDHVHQFSIITELLGSPPADVIDTICSENTLRFVQSLPHRDPIPFSERFASCTHVEPEAIDLLAKLLVFDPKKRISAVEGLTHPYMEAYHDPTDEPVCESKFDWSFNDADLPVDTWRVMMYSEILDFHQTVGVANETEGSEQPDSQVEQNNLDSANGA</sequence>
<name>HOG1_CANAL</name>
<keyword id="KW-0010">Activator</keyword>
<keyword id="KW-0067">ATP-binding</keyword>
<keyword id="KW-0963">Cytoplasm</keyword>
<keyword id="KW-0418">Kinase</keyword>
<keyword id="KW-0547">Nucleotide-binding</keyword>
<keyword id="KW-0539">Nucleus</keyword>
<keyword id="KW-0597">Phosphoprotein</keyword>
<keyword id="KW-1185">Reference proteome</keyword>
<keyword id="KW-0723">Serine/threonine-protein kinase</keyword>
<keyword id="KW-0804">Transcription</keyword>
<keyword id="KW-0805">Transcription regulation</keyword>
<keyword id="KW-0808">Transferase</keyword>
<evidence type="ECO:0000250" key="1"/>
<evidence type="ECO:0000250" key="2">
    <source>
        <dbReference type="UniProtKB" id="P32485"/>
    </source>
</evidence>
<evidence type="ECO:0000250" key="3">
    <source>
        <dbReference type="UniProtKB" id="Q16539"/>
    </source>
</evidence>
<evidence type="ECO:0000255" key="4">
    <source>
        <dbReference type="PROSITE-ProRule" id="PRU00159"/>
    </source>
</evidence>
<evidence type="ECO:0000255" key="5">
    <source>
        <dbReference type="PROSITE-ProRule" id="PRU10027"/>
    </source>
</evidence>
<evidence type="ECO:0000256" key="6">
    <source>
        <dbReference type="SAM" id="MobiDB-lite"/>
    </source>
</evidence>
<evidence type="ECO:0000269" key="7">
    <source>
    </source>
</evidence>
<evidence type="ECO:0000269" key="8">
    <source>
    </source>
</evidence>
<evidence type="ECO:0000269" key="9">
    <source>
    </source>
</evidence>
<evidence type="ECO:0000269" key="10">
    <source>
    </source>
</evidence>
<evidence type="ECO:0000269" key="11">
    <source>
    </source>
</evidence>
<evidence type="ECO:0000269" key="12">
    <source>
    </source>
</evidence>
<evidence type="ECO:0000269" key="13">
    <source>
    </source>
</evidence>
<evidence type="ECO:0000269" key="14">
    <source>
    </source>
</evidence>
<evidence type="ECO:0000269" key="15">
    <source>
    </source>
</evidence>
<evidence type="ECO:0000269" key="16">
    <source>
    </source>
</evidence>
<evidence type="ECO:0000269" key="17">
    <source>
    </source>
</evidence>
<evidence type="ECO:0000305" key="18"/>
<comment type="function">
    <text evidence="7 8 9 10 11 12 13 14 15 17">Proline-directed serine/threonine-protein kinase involved in a signal transduction pathway that is activated by changes in the osmolarity of the extracellular environment. Controls osmotic regulation of transcription of target genes. Regulates stress-induced production and accumulation of glycerol and D-arabitol. HOG1 is also involved in virulence, morphogenesis and oxidative stress response especially through its role in chlamydospore formation, an oxygen-dependent morphogenetic program.</text>
</comment>
<comment type="catalytic activity">
    <reaction evidence="2">
        <text>L-seryl-[protein] + ATP = O-phospho-L-seryl-[protein] + ADP + H(+)</text>
        <dbReference type="Rhea" id="RHEA:17989"/>
        <dbReference type="Rhea" id="RHEA-COMP:9863"/>
        <dbReference type="Rhea" id="RHEA-COMP:11604"/>
        <dbReference type="ChEBI" id="CHEBI:15378"/>
        <dbReference type="ChEBI" id="CHEBI:29999"/>
        <dbReference type="ChEBI" id="CHEBI:30616"/>
        <dbReference type="ChEBI" id="CHEBI:83421"/>
        <dbReference type="ChEBI" id="CHEBI:456216"/>
        <dbReference type="EC" id="2.7.11.24"/>
    </reaction>
    <physiologicalReaction direction="left-to-right" evidence="2">
        <dbReference type="Rhea" id="RHEA:17990"/>
    </physiologicalReaction>
</comment>
<comment type="catalytic activity">
    <reaction evidence="2">
        <text>L-threonyl-[protein] + ATP = O-phospho-L-threonyl-[protein] + ADP + H(+)</text>
        <dbReference type="Rhea" id="RHEA:46608"/>
        <dbReference type="Rhea" id="RHEA-COMP:11060"/>
        <dbReference type="Rhea" id="RHEA-COMP:11605"/>
        <dbReference type="ChEBI" id="CHEBI:15378"/>
        <dbReference type="ChEBI" id="CHEBI:30013"/>
        <dbReference type="ChEBI" id="CHEBI:30616"/>
        <dbReference type="ChEBI" id="CHEBI:61977"/>
        <dbReference type="ChEBI" id="CHEBI:456216"/>
        <dbReference type="EC" id="2.7.11.24"/>
    </reaction>
    <physiologicalReaction direction="left-to-right" evidence="2">
        <dbReference type="Rhea" id="RHEA:46609"/>
    </physiologicalReaction>
</comment>
<comment type="cofactor">
    <cofactor evidence="3">
        <name>Mg(2+)</name>
        <dbReference type="ChEBI" id="CHEBI:18420"/>
    </cofactor>
</comment>
<comment type="activity regulation">
    <text evidence="1">Activated by tyrosine and threonine phosphorylation.</text>
</comment>
<comment type="subcellular location">
    <subcellularLocation>
        <location>Cytoplasm</location>
    </subcellularLocation>
    <subcellularLocation>
        <location>Nucleus</location>
    </subcellularLocation>
    <text>Predominantly cytoplasmic in unstressed cells but rapidly concentrates within the nucleus in response to hyperosmotic conditions and phosphorylation.</text>
</comment>
<comment type="domain">
    <text>The TXY motif contains the threonine and tyrosine residues whose phosphorylation activates the MAP kinases.</text>
</comment>
<comment type="PTM">
    <text evidence="1 8 9 10 12 16">Dually phosphorylated on Thr-174 and Tyr-176, which activates the enzyme (By similarity). Phosphorylated in response to oxidative and salt stress.</text>
</comment>
<comment type="similarity">
    <text evidence="4">Belongs to the protein kinase superfamily. Ser/Thr protein kinase family. MAP kinase subfamily. HOG1 sub-subfamily.</text>
</comment>
<gene>
    <name type="primary">HOG1</name>
    <name type="ordered locus">CAALFM_C203330CA</name>
    <name type="ORF">CaO19.8514</name>
    <name type="ORF">CaO19.895</name>
</gene>